<gene>
    <name evidence="1" type="primary">proS</name>
    <name type="ordered locus">SAUSA300_1156</name>
</gene>
<evidence type="ECO:0000255" key="1">
    <source>
        <dbReference type="HAMAP-Rule" id="MF_01569"/>
    </source>
</evidence>
<sequence>MKQSKVFIPTMRDVPSEAEAQSHRLLLKSGLIKQSTSGIYSYLPLATRVLNNITAIVRQEMERIDSVEILMPALQQAELWEESGRWGAYGPELMRLQDRHGRQFALGPTHEELVTSIVRNELKSYKQLPMTLFQIQSKFRDEKRPRFGLLRGREFIMKDAYSFHADEASLDQTYQDMYQAYSRIFERVGINARPVVADSGAIGGSHTHEFMALSAIGEDTIVYSKESDYAANIEKAEVVYEPNHKHTTVQPLEKIETPNVKTAQELADFLGRPVDEIVKTMIFKVDGEYIMVLVRGHHEINDIKLKSYFGTDNIELATQDEIVNLVGANPGSLGPVIDKEIKIYADNFVQDLNNLVVGANEDGYHLINVNVGRDFNVDEYGDFRFILEGEKLSDGSGVAHFAEGIEVGQVFKLGTKYSESMNATFLDNQGKAQSLIMGCYGIGISRTLSAIVEQNHDDNGIVWPKSVTPFDLHLISINPKKDDQRELADALYAEFNTKFDVLYDDRQERAGVKFNDADLIGLPLRIVVGKRASEGIVEVKERLTGDSEEVHIDDLMTVITNKYDNLK</sequence>
<comment type="function">
    <text evidence="1">Catalyzes the attachment of proline to tRNA(Pro) in a two-step reaction: proline is first activated by ATP to form Pro-AMP and then transferred to the acceptor end of tRNA(Pro). As ProRS can inadvertently accommodate and process non-cognate amino acids such as alanine and cysteine, to avoid such errors it has two additional distinct editing activities against alanine. One activity is designated as 'pretransfer' editing and involves the tRNA(Pro)-independent hydrolysis of activated Ala-AMP. The other activity is designated 'posttransfer' editing and involves deacylation of mischarged Ala-tRNA(Pro). The misacylated Cys-tRNA(Pro) is not edited by ProRS.</text>
</comment>
<comment type="catalytic activity">
    <reaction evidence="1">
        <text>tRNA(Pro) + L-proline + ATP = L-prolyl-tRNA(Pro) + AMP + diphosphate</text>
        <dbReference type="Rhea" id="RHEA:14305"/>
        <dbReference type="Rhea" id="RHEA-COMP:9700"/>
        <dbReference type="Rhea" id="RHEA-COMP:9702"/>
        <dbReference type="ChEBI" id="CHEBI:30616"/>
        <dbReference type="ChEBI" id="CHEBI:33019"/>
        <dbReference type="ChEBI" id="CHEBI:60039"/>
        <dbReference type="ChEBI" id="CHEBI:78442"/>
        <dbReference type="ChEBI" id="CHEBI:78532"/>
        <dbReference type="ChEBI" id="CHEBI:456215"/>
        <dbReference type="EC" id="6.1.1.15"/>
    </reaction>
</comment>
<comment type="subunit">
    <text evidence="1">Homodimer.</text>
</comment>
<comment type="subcellular location">
    <subcellularLocation>
        <location evidence="1">Cytoplasm</location>
    </subcellularLocation>
</comment>
<comment type="domain">
    <text evidence="1">Consists of three domains: the N-terminal catalytic domain, the editing domain and the C-terminal anticodon-binding domain.</text>
</comment>
<comment type="similarity">
    <text evidence="1">Belongs to the class-II aminoacyl-tRNA synthetase family. ProS type 1 subfamily.</text>
</comment>
<reference key="1">
    <citation type="journal article" date="2006" name="Lancet">
        <title>Complete genome sequence of USA300, an epidemic clone of community-acquired meticillin-resistant Staphylococcus aureus.</title>
        <authorList>
            <person name="Diep B.A."/>
            <person name="Gill S.R."/>
            <person name="Chang R.F."/>
            <person name="Phan T.H."/>
            <person name="Chen J.H."/>
            <person name="Davidson M.G."/>
            <person name="Lin F."/>
            <person name="Lin J."/>
            <person name="Carleton H.A."/>
            <person name="Mongodin E.F."/>
            <person name="Sensabaugh G.F."/>
            <person name="Perdreau-Remington F."/>
        </authorList>
    </citation>
    <scope>NUCLEOTIDE SEQUENCE [LARGE SCALE GENOMIC DNA]</scope>
    <source>
        <strain>USA300</strain>
    </source>
</reference>
<proteinExistence type="inferred from homology"/>
<keyword id="KW-0030">Aminoacyl-tRNA synthetase</keyword>
<keyword id="KW-0067">ATP-binding</keyword>
<keyword id="KW-0963">Cytoplasm</keyword>
<keyword id="KW-0436">Ligase</keyword>
<keyword id="KW-0547">Nucleotide-binding</keyword>
<keyword id="KW-0648">Protein biosynthesis</keyword>
<protein>
    <recommendedName>
        <fullName evidence="1">Proline--tRNA ligase</fullName>
        <ecNumber evidence="1">6.1.1.15</ecNumber>
    </recommendedName>
    <alternativeName>
        <fullName evidence="1">Prolyl-tRNA synthetase</fullName>
        <shortName evidence="1">ProRS</shortName>
    </alternativeName>
</protein>
<organism>
    <name type="scientific">Staphylococcus aureus (strain USA300)</name>
    <dbReference type="NCBI Taxonomy" id="367830"/>
    <lineage>
        <taxon>Bacteria</taxon>
        <taxon>Bacillati</taxon>
        <taxon>Bacillota</taxon>
        <taxon>Bacilli</taxon>
        <taxon>Bacillales</taxon>
        <taxon>Staphylococcaceae</taxon>
        <taxon>Staphylococcus</taxon>
    </lineage>
</organism>
<feature type="chain" id="PRO_0000248770" description="Proline--tRNA ligase">
    <location>
        <begin position="1"/>
        <end position="567"/>
    </location>
</feature>
<accession>Q2FHH5</accession>
<name>SYP_STAA3</name>
<dbReference type="EC" id="6.1.1.15" evidence="1"/>
<dbReference type="EMBL" id="CP000255">
    <property type="protein sequence ID" value="ABD22167.1"/>
    <property type="molecule type" value="Genomic_DNA"/>
</dbReference>
<dbReference type="RefSeq" id="WP_000814103.1">
    <property type="nucleotide sequence ID" value="NZ_CP027476.1"/>
</dbReference>
<dbReference type="SMR" id="Q2FHH5"/>
<dbReference type="KEGG" id="saa:SAUSA300_1156"/>
<dbReference type="HOGENOM" id="CLU_016739_0_0_9"/>
<dbReference type="OMA" id="NCDYAAN"/>
<dbReference type="Proteomes" id="UP000001939">
    <property type="component" value="Chromosome"/>
</dbReference>
<dbReference type="GO" id="GO:0005829">
    <property type="term" value="C:cytosol"/>
    <property type="evidence" value="ECO:0007669"/>
    <property type="project" value="TreeGrafter"/>
</dbReference>
<dbReference type="GO" id="GO:0002161">
    <property type="term" value="F:aminoacyl-tRNA deacylase activity"/>
    <property type="evidence" value="ECO:0007669"/>
    <property type="project" value="InterPro"/>
</dbReference>
<dbReference type="GO" id="GO:0005524">
    <property type="term" value="F:ATP binding"/>
    <property type="evidence" value="ECO:0007669"/>
    <property type="project" value="UniProtKB-UniRule"/>
</dbReference>
<dbReference type="GO" id="GO:0140096">
    <property type="term" value="F:catalytic activity, acting on a protein"/>
    <property type="evidence" value="ECO:0007669"/>
    <property type="project" value="UniProtKB-ARBA"/>
</dbReference>
<dbReference type="GO" id="GO:0004827">
    <property type="term" value="F:proline-tRNA ligase activity"/>
    <property type="evidence" value="ECO:0007669"/>
    <property type="project" value="UniProtKB-UniRule"/>
</dbReference>
<dbReference type="GO" id="GO:0016740">
    <property type="term" value="F:transferase activity"/>
    <property type="evidence" value="ECO:0007669"/>
    <property type="project" value="UniProtKB-ARBA"/>
</dbReference>
<dbReference type="GO" id="GO:0006433">
    <property type="term" value="P:prolyl-tRNA aminoacylation"/>
    <property type="evidence" value="ECO:0007669"/>
    <property type="project" value="UniProtKB-UniRule"/>
</dbReference>
<dbReference type="CDD" id="cd04334">
    <property type="entry name" value="ProRS-INS"/>
    <property type="match status" value="1"/>
</dbReference>
<dbReference type="CDD" id="cd00861">
    <property type="entry name" value="ProRS_anticodon_short"/>
    <property type="match status" value="1"/>
</dbReference>
<dbReference type="CDD" id="cd00779">
    <property type="entry name" value="ProRS_core_prok"/>
    <property type="match status" value="1"/>
</dbReference>
<dbReference type="FunFam" id="3.30.930.10:FF:000043">
    <property type="entry name" value="Proline--tRNA ligase"/>
    <property type="match status" value="1"/>
</dbReference>
<dbReference type="FunFam" id="3.40.50.800:FF:000011">
    <property type="entry name" value="Proline--tRNA ligase"/>
    <property type="match status" value="1"/>
</dbReference>
<dbReference type="Gene3D" id="3.40.50.800">
    <property type="entry name" value="Anticodon-binding domain"/>
    <property type="match status" value="1"/>
</dbReference>
<dbReference type="Gene3D" id="3.30.930.10">
    <property type="entry name" value="Bira Bifunctional Protein, Domain 2"/>
    <property type="match status" value="2"/>
</dbReference>
<dbReference type="Gene3D" id="3.90.960.10">
    <property type="entry name" value="YbaK/aminoacyl-tRNA synthetase-associated domain"/>
    <property type="match status" value="1"/>
</dbReference>
<dbReference type="HAMAP" id="MF_01569">
    <property type="entry name" value="Pro_tRNA_synth_type1"/>
    <property type="match status" value="1"/>
</dbReference>
<dbReference type="InterPro" id="IPR002314">
    <property type="entry name" value="aa-tRNA-synt_IIb"/>
</dbReference>
<dbReference type="InterPro" id="IPR006195">
    <property type="entry name" value="aa-tRNA-synth_II"/>
</dbReference>
<dbReference type="InterPro" id="IPR045864">
    <property type="entry name" value="aa-tRNA-synth_II/BPL/LPL"/>
</dbReference>
<dbReference type="InterPro" id="IPR004154">
    <property type="entry name" value="Anticodon-bd"/>
</dbReference>
<dbReference type="InterPro" id="IPR036621">
    <property type="entry name" value="Anticodon-bd_dom_sf"/>
</dbReference>
<dbReference type="InterPro" id="IPR002316">
    <property type="entry name" value="Pro-tRNA-ligase_IIa"/>
</dbReference>
<dbReference type="InterPro" id="IPR004500">
    <property type="entry name" value="Pro-tRNA-synth_IIa_bac-type"/>
</dbReference>
<dbReference type="InterPro" id="IPR023717">
    <property type="entry name" value="Pro-tRNA-Synthase_IIa_type1"/>
</dbReference>
<dbReference type="InterPro" id="IPR050062">
    <property type="entry name" value="Pro-tRNA_synthetase"/>
</dbReference>
<dbReference type="InterPro" id="IPR044140">
    <property type="entry name" value="ProRS_anticodon_short"/>
</dbReference>
<dbReference type="InterPro" id="IPR033730">
    <property type="entry name" value="ProRS_core_prok"/>
</dbReference>
<dbReference type="InterPro" id="IPR036754">
    <property type="entry name" value="YbaK/aa-tRNA-synt-asso_dom_sf"/>
</dbReference>
<dbReference type="InterPro" id="IPR007214">
    <property type="entry name" value="YbaK/aa-tRNA-synth-assoc-dom"/>
</dbReference>
<dbReference type="NCBIfam" id="NF006625">
    <property type="entry name" value="PRK09194.1"/>
    <property type="match status" value="1"/>
</dbReference>
<dbReference type="NCBIfam" id="TIGR00409">
    <property type="entry name" value="proS_fam_II"/>
    <property type="match status" value="1"/>
</dbReference>
<dbReference type="PANTHER" id="PTHR42753">
    <property type="entry name" value="MITOCHONDRIAL RIBOSOME PROTEIN L39/PROLYL-TRNA LIGASE FAMILY MEMBER"/>
    <property type="match status" value="1"/>
</dbReference>
<dbReference type="PANTHER" id="PTHR42753:SF2">
    <property type="entry name" value="PROLINE--TRNA LIGASE"/>
    <property type="match status" value="1"/>
</dbReference>
<dbReference type="Pfam" id="PF03129">
    <property type="entry name" value="HGTP_anticodon"/>
    <property type="match status" value="1"/>
</dbReference>
<dbReference type="Pfam" id="PF00587">
    <property type="entry name" value="tRNA-synt_2b"/>
    <property type="match status" value="1"/>
</dbReference>
<dbReference type="Pfam" id="PF04073">
    <property type="entry name" value="tRNA_edit"/>
    <property type="match status" value="1"/>
</dbReference>
<dbReference type="PRINTS" id="PR01046">
    <property type="entry name" value="TRNASYNTHPRO"/>
</dbReference>
<dbReference type="SUPFAM" id="SSF52954">
    <property type="entry name" value="Class II aaRS ABD-related"/>
    <property type="match status" value="1"/>
</dbReference>
<dbReference type="SUPFAM" id="SSF55681">
    <property type="entry name" value="Class II aaRS and biotin synthetases"/>
    <property type="match status" value="1"/>
</dbReference>
<dbReference type="SUPFAM" id="SSF55826">
    <property type="entry name" value="YbaK/ProRS associated domain"/>
    <property type="match status" value="1"/>
</dbReference>
<dbReference type="PROSITE" id="PS50862">
    <property type="entry name" value="AA_TRNA_LIGASE_II"/>
    <property type="match status" value="1"/>
</dbReference>